<comment type="similarity">
    <text evidence="1">Belongs to the UPF0145 family.</text>
</comment>
<keyword id="KW-1185">Reference proteome</keyword>
<organism>
    <name type="scientific">Halobacterium salinarum (strain ATCC 700922 / JCM 11081 / NRC-1)</name>
    <name type="common">Halobacterium halobium</name>
    <dbReference type="NCBI Taxonomy" id="64091"/>
    <lineage>
        <taxon>Archaea</taxon>
        <taxon>Methanobacteriati</taxon>
        <taxon>Methanobacteriota</taxon>
        <taxon>Stenosarchaea group</taxon>
        <taxon>Halobacteria</taxon>
        <taxon>Halobacteriales</taxon>
        <taxon>Halobacteriaceae</taxon>
        <taxon>Halobacterium</taxon>
        <taxon>Halobacterium salinarum NRC-34001</taxon>
    </lineage>
</organism>
<name>Y2432_HALSA</name>
<sequence>MEFVTTETVPGREITESLGVARGNTVKARNVGRDITQSIRNITGGELKAYSELLTDARDDALDRMAEDARSMGADAVVNVRLESSEIANGGSEVIAYGTAVTLA</sequence>
<feature type="chain" id="PRO_0000138493" description="UPF0145 protein VNG_2432C">
    <location>
        <begin position="1"/>
        <end position="104"/>
    </location>
</feature>
<gene>
    <name type="ordered locus">VNG_2432C</name>
</gene>
<proteinExistence type="inferred from homology"/>
<reference key="1">
    <citation type="journal article" date="2000" name="Proc. Natl. Acad. Sci. U.S.A.">
        <title>Genome sequence of Halobacterium species NRC-1.</title>
        <authorList>
            <person name="Ng W.V."/>
            <person name="Kennedy S.P."/>
            <person name="Mahairas G.G."/>
            <person name="Berquist B."/>
            <person name="Pan M."/>
            <person name="Shukla H.D."/>
            <person name="Lasky S.R."/>
            <person name="Baliga N.S."/>
            <person name="Thorsson V."/>
            <person name="Sbrogna J."/>
            <person name="Swartzell S."/>
            <person name="Weir D."/>
            <person name="Hall J."/>
            <person name="Dahl T.A."/>
            <person name="Welti R."/>
            <person name="Goo Y.A."/>
            <person name="Leithauser B."/>
            <person name="Keller K."/>
            <person name="Cruz R."/>
            <person name="Danson M.J."/>
            <person name="Hough D.W."/>
            <person name="Maddocks D.G."/>
            <person name="Jablonski P.E."/>
            <person name="Krebs M.P."/>
            <person name="Angevine C.M."/>
            <person name="Dale H."/>
            <person name="Isenbarger T.A."/>
            <person name="Peck R.F."/>
            <person name="Pohlschroder M."/>
            <person name="Spudich J.L."/>
            <person name="Jung K.-H."/>
            <person name="Alam M."/>
            <person name="Freitas T."/>
            <person name="Hou S."/>
            <person name="Daniels C.J."/>
            <person name="Dennis P.P."/>
            <person name="Omer A.D."/>
            <person name="Ebhardt H."/>
            <person name="Lowe T.M."/>
            <person name="Liang P."/>
            <person name="Riley M."/>
            <person name="Hood L."/>
            <person name="DasSarma S."/>
        </authorList>
    </citation>
    <scope>NUCLEOTIDE SEQUENCE [LARGE SCALE GENOMIC DNA]</scope>
    <source>
        <strain>ATCC 700922 / JCM 11081 / NRC-1</strain>
    </source>
</reference>
<accession>Q9HMQ5</accession>
<evidence type="ECO:0000305" key="1"/>
<dbReference type="EMBL" id="AE004437">
    <property type="protein sequence ID" value="AAG20516.1"/>
    <property type="molecule type" value="Genomic_DNA"/>
</dbReference>
<dbReference type="PIR" id="H84393">
    <property type="entry name" value="H84393"/>
</dbReference>
<dbReference type="RefSeq" id="WP_010903818.1">
    <property type="nucleotide sequence ID" value="NC_002607.1"/>
</dbReference>
<dbReference type="SMR" id="Q9HMQ5"/>
<dbReference type="STRING" id="64091.VNG_2432C"/>
<dbReference type="PaxDb" id="64091-VNG_2432C"/>
<dbReference type="KEGG" id="hal:VNG_2432C"/>
<dbReference type="PATRIC" id="fig|64091.14.peg.1884"/>
<dbReference type="HOGENOM" id="CLU_117144_1_2_2"/>
<dbReference type="InParanoid" id="Q9HMQ5"/>
<dbReference type="OrthoDB" id="59443at2157"/>
<dbReference type="PhylomeDB" id="Q9HMQ5"/>
<dbReference type="Proteomes" id="UP000000554">
    <property type="component" value="Chromosome"/>
</dbReference>
<dbReference type="Gene3D" id="3.30.110.70">
    <property type="entry name" value="Hypothetical protein apc22750. Chain B"/>
    <property type="match status" value="1"/>
</dbReference>
<dbReference type="HAMAP" id="MF_00338">
    <property type="entry name" value="UPF0145"/>
    <property type="match status" value="1"/>
</dbReference>
<dbReference type="InterPro" id="IPR035439">
    <property type="entry name" value="UPF0145_dom_sf"/>
</dbReference>
<dbReference type="InterPro" id="IPR002765">
    <property type="entry name" value="UPF0145_YbjQ-like"/>
</dbReference>
<dbReference type="PANTHER" id="PTHR34068:SF2">
    <property type="entry name" value="UPF0145 PROTEIN SCO3412"/>
    <property type="match status" value="1"/>
</dbReference>
<dbReference type="PANTHER" id="PTHR34068">
    <property type="entry name" value="UPF0145 PROTEIN YBJQ"/>
    <property type="match status" value="1"/>
</dbReference>
<dbReference type="Pfam" id="PF01906">
    <property type="entry name" value="YbjQ_1"/>
    <property type="match status" value="1"/>
</dbReference>
<dbReference type="SUPFAM" id="SSF117782">
    <property type="entry name" value="YbjQ-like"/>
    <property type="match status" value="1"/>
</dbReference>
<protein>
    <recommendedName>
        <fullName>UPF0145 protein VNG_2432C</fullName>
    </recommendedName>
</protein>